<organism>
    <name type="scientific">Rattus norvegicus</name>
    <name type="common">Rat</name>
    <dbReference type="NCBI Taxonomy" id="10116"/>
    <lineage>
        <taxon>Eukaryota</taxon>
        <taxon>Metazoa</taxon>
        <taxon>Chordata</taxon>
        <taxon>Craniata</taxon>
        <taxon>Vertebrata</taxon>
        <taxon>Euteleostomi</taxon>
        <taxon>Mammalia</taxon>
        <taxon>Eutheria</taxon>
        <taxon>Euarchontoglires</taxon>
        <taxon>Glires</taxon>
        <taxon>Rodentia</taxon>
        <taxon>Myomorpha</taxon>
        <taxon>Muroidea</taxon>
        <taxon>Muridae</taxon>
        <taxon>Murinae</taxon>
        <taxon>Rattus</taxon>
    </lineage>
</organism>
<evidence type="ECO:0000250" key="1">
    <source>
        <dbReference type="UniProtKB" id="O75962"/>
    </source>
</evidence>
<evidence type="ECO:0000250" key="2">
    <source>
        <dbReference type="UniProtKB" id="Q0KL02"/>
    </source>
</evidence>
<evidence type="ECO:0000255" key="3">
    <source>
        <dbReference type="PROSITE-ProRule" id="PRU00056"/>
    </source>
</evidence>
<evidence type="ECO:0000255" key="4">
    <source>
        <dbReference type="PROSITE-ProRule" id="PRU00062"/>
    </source>
</evidence>
<evidence type="ECO:0000255" key="5">
    <source>
        <dbReference type="PROSITE-ProRule" id="PRU00114"/>
    </source>
</evidence>
<evidence type="ECO:0000255" key="6">
    <source>
        <dbReference type="PROSITE-ProRule" id="PRU00145"/>
    </source>
</evidence>
<evidence type="ECO:0000255" key="7">
    <source>
        <dbReference type="PROSITE-ProRule" id="PRU00159"/>
    </source>
</evidence>
<evidence type="ECO:0000255" key="8">
    <source>
        <dbReference type="PROSITE-ProRule" id="PRU00192"/>
    </source>
</evidence>
<evidence type="ECO:0000256" key="9">
    <source>
        <dbReference type="SAM" id="MobiDB-lite"/>
    </source>
</evidence>
<evidence type="ECO:0000269" key="10">
    <source>
    </source>
</evidence>
<evidence type="ECO:0000269" key="11">
    <source>
    </source>
</evidence>
<evidence type="ECO:0000305" key="12"/>
<evidence type="ECO:0007744" key="13">
    <source>
    </source>
</evidence>
<comment type="function">
    <text evidence="1 2 10">Guanine nucleotide exchange factor (GEF) for RHOA and RAC1 GTPases. Involved in coordinating actin remodeling, which is necessary for cell migration and growth (By similarity). Plays a key role in the regulation of neurite outgrowth and lamellipodia formation (By similarity). In developing hippocampal neurons, limits dendrite formation, without affecting the establishment of axon polarity. Once dendrites are formed, involved in the control of synaptic function by regulating the endocytosis of AMPA-selective glutamate receptors (AMPARs) at CA1 excitatory synapses (PubMed:26721934). May act as a regulator of adipogenesis (By similarity).</text>
</comment>
<comment type="catalytic activity">
    <reaction>
        <text>L-seryl-[protein] + ATP = O-phospho-L-seryl-[protein] + ADP + H(+)</text>
        <dbReference type="Rhea" id="RHEA:17989"/>
        <dbReference type="Rhea" id="RHEA-COMP:9863"/>
        <dbReference type="Rhea" id="RHEA-COMP:11604"/>
        <dbReference type="ChEBI" id="CHEBI:15378"/>
        <dbReference type="ChEBI" id="CHEBI:29999"/>
        <dbReference type="ChEBI" id="CHEBI:30616"/>
        <dbReference type="ChEBI" id="CHEBI:83421"/>
        <dbReference type="ChEBI" id="CHEBI:456216"/>
        <dbReference type="EC" id="2.7.11.1"/>
    </reaction>
</comment>
<comment type="catalytic activity">
    <reaction>
        <text>L-threonyl-[protein] + ATP = O-phospho-L-threonyl-[protein] + ADP + H(+)</text>
        <dbReference type="Rhea" id="RHEA:46608"/>
        <dbReference type="Rhea" id="RHEA-COMP:11060"/>
        <dbReference type="Rhea" id="RHEA-COMP:11605"/>
        <dbReference type="ChEBI" id="CHEBI:15378"/>
        <dbReference type="ChEBI" id="CHEBI:30013"/>
        <dbReference type="ChEBI" id="CHEBI:30616"/>
        <dbReference type="ChEBI" id="CHEBI:61977"/>
        <dbReference type="ChEBI" id="CHEBI:456216"/>
        <dbReference type="EC" id="2.7.11.1"/>
    </reaction>
</comment>
<comment type="subunit">
    <text evidence="1 11">Interacts with CARMIL1 (By similarity). Interacts with PTPRF/LAR (By similarity). Interacts with ANKRD26 (By similarity). Interacts with Bassoon/BSN and Piccolo/PCLO (PubMed:27907191). Interacts with the cytoplasmic region of the heterodimer formed by NGFR and SORCS2. ProNGF binding mediates dissociation of TRIO from the receptor complex (By similarity).</text>
</comment>
<comment type="interaction">
    <interactant intactId="EBI-26961238">
        <id>F1M0Z1</id>
    </interactant>
    <interactant intactId="EBI-7281118">
        <id>Q62765</id>
        <label>Nlgn1</label>
    </interactant>
    <organismsDiffer>false</organismsDiffer>
    <experiments>2</experiments>
</comment>
<comment type="subcellular location">
    <subcellularLocation>
        <location evidence="2">Cytoplasm</location>
    </subcellularLocation>
    <subcellularLocation>
        <location evidence="2">Cell projection</location>
    </subcellularLocation>
</comment>
<comment type="developmental stage">
    <text evidence="10">Highly expressed during the early postnatal period (P1 to P7) in the hippocampus. At P11, levels start to decrease rapidly until p19 and then more progressively until adulthood (at protein level).</text>
</comment>
<comment type="domain">
    <text evidence="1">The N-terminal DBL/GEF domain specifically catalyzes nucleotide exchange for RAC1, leading to the activation of Jun kinase and the production of membrane ruffles. The second DBL/GEF domain is an exchange factor for rhoa and induces the formation of stress fibers.</text>
</comment>
<comment type="PTM">
    <text evidence="1">Phosphorylated on serine residue(s).</text>
</comment>
<comment type="similarity">
    <text evidence="12">Belongs to the protein kinase superfamily. CAMK Ser/Thr protein kinase family.</text>
</comment>
<proteinExistence type="evidence at protein level"/>
<feature type="chain" id="PRO_0000438732" description="Triple functional domain protein">
    <location>
        <begin position="1"/>
        <end position="3100"/>
    </location>
</feature>
<feature type="domain" description="CRAL-TRIO" evidence="3">
    <location>
        <begin position="65"/>
        <end position="210"/>
    </location>
</feature>
<feature type="repeat" description="Spectrin 1">
    <location>
        <begin position="311"/>
        <end position="418"/>
    </location>
</feature>
<feature type="repeat" description="Spectrin 2">
    <location>
        <begin position="538"/>
        <end position="644"/>
    </location>
</feature>
<feature type="repeat" description="Spectrin 3">
    <location>
        <begin position="878"/>
        <end position="984"/>
    </location>
</feature>
<feature type="repeat" description="Spectrin 4">
    <location>
        <begin position="1109"/>
        <end position="1216"/>
    </location>
</feature>
<feature type="domain" description="DH 1" evidence="4">
    <location>
        <begin position="1292"/>
        <end position="1467"/>
    </location>
</feature>
<feature type="domain" description="PH 1" evidence="6">
    <location>
        <begin position="1479"/>
        <end position="1591"/>
    </location>
</feature>
<feature type="domain" description="SH3 1" evidence="8">
    <location>
        <begin position="1656"/>
        <end position="1721"/>
    </location>
</feature>
<feature type="domain" description="DH 2" evidence="4">
    <location>
        <begin position="1970"/>
        <end position="2146"/>
    </location>
</feature>
<feature type="domain" description="PH 2" evidence="6">
    <location>
        <begin position="2158"/>
        <end position="2272"/>
    </location>
</feature>
<feature type="domain" description="SH3 2" evidence="8">
    <location>
        <begin position="2556"/>
        <end position="2621"/>
    </location>
</feature>
<feature type="domain" description="Ig-like C2-type" evidence="5">
    <location>
        <begin position="2686"/>
        <end position="2776"/>
    </location>
</feature>
<feature type="domain" description="Protein kinase" evidence="7">
    <location>
        <begin position="2797"/>
        <end position="3051"/>
    </location>
</feature>
<feature type="region of interest" description="Disordered" evidence="9">
    <location>
        <begin position="1"/>
        <end position="27"/>
    </location>
</feature>
<feature type="region of interest" description="Disordered" evidence="9">
    <location>
        <begin position="1601"/>
        <end position="1651"/>
    </location>
</feature>
<feature type="region of interest" description="Disordered" evidence="9">
    <location>
        <begin position="1738"/>
        <end position="1907"/>
    </location>
</feature>
<feature type="region of interest" description="Disordered" evidence="9">
    <location>
        <begin position="1927"/>
        <end position="1956"/>
    </location>
</feature>
<feature type="region of interest" description="Disordered" evidence="9">
    <location>
        <begin position="2288"/>
        <end position="2557"/>
    </location>
</feature>
<feature type="region of interest" description="Disordered" evidence="9">
    <location>
        <begin position="2644"/>
        <end position="2668"/>
    </location>
</feature>
<feature type="compositionally biased region" description="Low complexity" evidence="9">
    <location>
        <begin position="7"/>
        <end position="25"/>
    </location>
</feature>
<feature type="compositionally biased region" description="Polar residues" evidence="9">
    <location>
        <begin position="1629"/>
        <end position="1649"/>
    </location>
</feature>
<feature type="compositionally biased region" description="Basic residues" evidence="9">
    <location>
        <begin position="1794"/>
        <end position="1805"/>
    </location>
</feature>
<feature type="compositionally biased region" description="Basic and acidic residues" evidence="9">
    <location>
        <begin position="1806"/>
        <end position="1819"/>
    </location>
</feature>
<feature type="compositionally biased region" description="Low complexity" evidence="9">
    <location>
        <begin position="1837"/>
        <end position="1855"/>
    </location>
</feature>
<feature type="compositionally biased region" description="Low complexity" evidence="9">
    <location>
        <begin position="1936"/>
        <end position="1954"/>
    </location>
</feature>
<feature type="compositionally biased region" description="Gly residues" evidence="9">
    <location>
        <begin position="2292"/>
        <end position="2316"/>
    </location>
</feature>
<feature type="compositionally biased region" description="Low complexity" evidence="9">
    <location>
        <begin position="2317"/>
        <end position="2342"/>
    </location>
</feature>
<feature type="compositionally biased region" description="Low complexity" evidence="9">
    <location>
        <begin position="2372"/>
        <end position="2387"/>
    </location>
</feature>
<feature type="compositionally biased region" description="Basic and acidic residues" evidence="9">
    <location>
        <begin position="2403"/>
        <end position="2423"/>
    </location>
</feature>
<feature type="compositionally biased region" description="Polar residues" evidence="9">
    <location>
        <begin position="2427"/>
        <end position="2436"/>
    </location>
</feature>
<feature type="compositionally biased region" description="Polar residues" evidence="9">
    <location>
        <begin position="2460"/>
        <end position="2470"/>
    </location>
</feature>
<feature type="compositionally biased region" description="Low complexity" evidence="9">
    <location>
        <begin position="2492"/>
        <end position="2504"/>
    </location>
</feature>
<feature type="compositionally biased region" description="Polar residues" evidence="9">
    <location>
        <begin position="2531"/>
        <end position="2540"/>
    </location>
</feature>
<feature type="compositionally biased region" description="Low complexity" evidence="9">
    <location>
        <begin position="2541"/>
        <end position="2557"/>
    </location>
</feature>
<feature type="compositionally biased region" description="Basic and acidic residues" evidence="9">
    <location>
        <begin position="2648"/>
        <end position="2668"/>
    </location>
</feature>
<feature type="active site" description="Proton acceptor" evidence="7">
    <location>
        <position position="2916"/>
    </location>
</feature>
<feature type="binding site" evidence="7">
    <location>
        <begin position="2803"/>
        <end position="2811"/>
    </location>
    <ligand>
        <name>ATP</name>
        <dbReference type="ChEBI" id="CHEBI:30616"/>
    </ligand>
</feature>
<feature type="binding site" evidence="7">
    <location>
        <position position="2826"/>
    </location>
    <ligand>
        <name>ATP</name>
        <dbReference type="ChEBI" id="CHEBI:30616"/>
    </ligand>
</feature>
<feature type="modified residue" description="Phosphoserine" evidence="13">
    <location>
        <position position="1627"/>
    </location>
</feature>
<feature type="modified residue" description="Phosphoserine" evidence="13">
    <location>
        <position position="1632"/>
    </location>
</feature>
<feature type="modified residue" description="Phosphoserine" evidence="13">
    <location>
        <position position="1633"/>
    </location>
</feature>
<feature type="modified residue" description="Phosphothreonine" evidence="13">
    <location>
        <position position="1824"/>
    </location>
</feature>
<feature type="modified residue" description="Phosphoserine" evidence="13">
    <location>
        <position position="2283"/>
    </location>
</feature>
<feature type="modified residue" description="Phosphoserine" evidence="13">
    <location>
        <position position="2459"/>
    </location>
</feature>
<feature type="modified residue" description="Phosphoserine" evidence="13">
    <location>
        <position position="2463"/>
    </location>
</feature>
<feature type="modified residue" description="Phosphoserine" evidence="1">
    <location>
        <position position="2636"/>
    </location>
</feature>
<feature type="disulfide bond" evidence="5">
    <location>
        <begin position="2707"/>
        <end position="2760"/>
    </location>
</feature>
<dbReference type="EC" id="2.7.11.1"/>
<dbReference type="EMBL" id="AABR07008947">
    <property type="status" value="NOT_ANNOTATED_CDS"/>
    <property type="molecule type" value="Genomic_DNA"/>
</dbReference>
<dbReference type="EMBL" id="AABR07008948">
    <property type="status" value="NOT_ANNOTATED_CDS"/>
    <property type="molecule type" value="Genomic_DNA"/>
</dbReference>
<dbReference type="RefSeq" id="XP_006232152.1">
    <property type="nucleotide sequence ID" value="XM_006232090.3"/>
</dbReference>
<dbReference type="SMR" id="F1M0Z1"/>
<dbReference type="FunCoup" id="F1M0Z1">
    <property type="interactions" value="3522"/>
</dbReference>
<dbReference type="IntAct" id="F1M0Z1">
    <property type="interactions" value="15"/>
</dbReference>
<dbReference type="MINT" id="F1M0Z1"/>
<dbReference type="STRING" id="10116.ENSRNOP00000016784"/>
<dbReference type="GlyGen" id="F1M0Z1">
    <property type="glycosylation" value="1 site"/>
</dbReference>
<dbReference type="iPTMnet" id="F1M0Z1"/>
<dbReference type="PhosphoSitePlus" id="F1M0Z1"/>
<dbReference type="PaxDb" id="10116-ENSRNOP00000016784"/>
<dbReference type="GeneID" id="310192"/>
<dbReference type="UCSC" id="RGD:1308360">
    <property type="organism name" value="rat"/>
</dbReference>
<dbReference type="AGR" id="RGD:1308360"/>
<dbReference type="CTD" id="7204"/>
<dbReference type="RGD" id="1308360">
    <property type="gene designation" value="Trio"/>
</dbReference>
<dbReference type="eggNOG" id="KOG0032">
    <property type="taxonomic scope" value="Eukaryota"/>
</dbReference>
<dbReference type="eggNOG" id="KOG4240">
    <property type="taxonomic scope" value="Eukaryota"/>
</dbReference>
<dbReference type="HOGENOM" id="CLU_000373_1_0_1"/>
<dbReference type="InParanoid" id="F1M0Z1"/>
<dbReference type="TreeFam" id="TF318080"/>
<dbReference type="Reactome" id="R-RNO-193648">
    <property type="pathway name" value="NRAGE signals death through JNK"/>
</dbReference>
<dbReference type="Reactome" id="R-RNO-416476">
    <property type="pathway name" value="G alpha (q) signalling events"/>
</dbReference>
<dbReference type="Reactome" id="R-RNO-416482">
    <property type="pathway name" value="G alpha (12/13) signalling events"/>
</dbReference>
<dbReference type="Reactome" id="R-RNO-418885">
    <property type="pathway name" value="DCC mediated attractive signaling"/>
</dbReference>
<dbReference type="Reactome" id="R-RNO-8980692">
    <property type="pathway name" value="RHOA GTPase cycle"/>
</dbReference>
<dbReference type="Reactome" id="R-RNO-9013148">
    <property type="pathway name" value="CDC42 GTPase cycle"/>
</dbReference>
<dbReference type="Reactome" id="R-RNO-9013149">
    <property type="pathway name" value="RAC1 GTPase cycle"/>
</dbReference>
<dbReference type="Reactome" id="R-RNO-9013404">
    <property type="pathway name" value="RAC2 GTPase cycle"/>
</dbReference>
<dbReference type="Reactome" id="R-RNO-9013408">
    <property type="pathway name" value="RHOG GTPase cycle"/>
</dbReference>
<dbReference type="Reactome" id="R-RNO-9013409">
    <property type="pathway name" value="RHOJ GTPase cycle"/>
</dbReference>
<dbReference type="PRO" id="PR:F1M0Z1"/>
<dbReference type="Proteomes" id="UP000002494">
    <property type="component" value="Unplaced"/>
</dbReference>
<dbReference type="GO" id="GO:0042995">
    <property type="term" value="C:cell projection"/>
    <property type="evidence" value="ECO:0007669"/>
    <property type="project" value="UniProtKB-SubCell"/>
</dbReference>
<dbReference type="GO" id="GO:0005737">
    <property type="term" value="C:cytoplasm"/>
    <property type="evidence" value="ECO:0000318"/>
    <property type="project" value="GO_Central"/>
</dbReference>
<dbReference type="GO" id="GO:0019898">
    <property type="term" value="C:extrinsic component of membrane"/>
    <property type="evidence" value="ECO:0000318"/>
    <property type="project" value="GO_Central"/>
</dbReference>
<dbReference type="GO" id="GO:0098978">
    <property type="term" value="C:glutamatergic synapse"/>
    <property type="evidence" value="ECO:0000314"/>
    <property type="project" value="SynGO"/>
</dbReference>
<dbReference type="GO" id="GO:0098794">
    <property type="term" value="C:postsynapse"/>
    <property type="evidence" value="ECO:0000314"/>
    <property type="project" value="SynGO"/>
</dbReference>
<dbReference type="GO" id="GO:0048786">
    <property type="term" value="C:presynaptic active zone"/>
    <property type="evidence" value="ECO:0000266"/>
    <property type="project" value="RGD"/>
</dbReference>
<dbReference type="GO" id="GO:0098685">
    <property type="term" value="C:Schaffer collateral - CA1 synapse"/>
    <property type="evidence" value="ECO:0000314"/>
    <property type="project" value="SynGO"/>
</dbReference>
<dbReference type="GO" id="GO:0005524">
    <property type="term" value="F:ATP binding"/>
    <property type="evidence" value="ECO:0007669"/>
    <property type="project" value="UniProtKB-KW"/>
</dbReference>
<dbReference type="GO" id="GO:0019899">
    <property type="term" value="F:enzyme binding"/>
    <property type="evidence" value="ECO:0000353"/>
    <property type="project" value="RGD"/>
</dbReference>
<dbReference type="GO" id="GO:0005085">
    <property type="term" value="F:guanyl-nucleotide exchange factor activity"/>
    <property type="evidence" value="ECO:0000318"/>
    <property type="project" value="GO_Central"/>
</dbReference>
<dbReference type="GO" id="GO:0106310">
    <property type="term" value="F:protein serine kinase activity"/>
    <property type="evidence" value="ECO:0007669"/>
    <property type="project" value="RHEA"/>
</dbReference>
<dbReference type="GO" id="GO:0004674">
    <property type="term" value="F:protein serine/threonine kinase activity"/>
    <property type="evidence" value="ECO:0007669"/>
    <property type="project" value="UniProtKB-KW"/>
</dbReference>
<dbReference type="GO" id="GO:0007411">
    <property type="term" value="P:axon guidance"/>
    <property type="evidence" value="ECO:0000318"/>
    <property type="project" value="GO_Central"/>
</dbReference>
<dbReference type="GO" id="GO:0050804">
    <property type="term" value="P:modulation of chemical synaptic transmission"/>
    <property type="evidence" value="ECO:0000314"/>
    <property type="project" value="SynGO"/>
</dbReference>
<dbReference type="GO" id="GO:0045599">
    <property type="term" value="P:negative regulation of fat cell differentiation"/>
    <property type="evidence" value="ECO:0000250"/>
    <property type="project" value="UniProtKB"/>
</dbReference>
<dbReference type="GO" id="GO:0048812">
    <property type="term" value="P:neuron projection morphogenesis"/>
    <property type="evidence" value="ECO:0000250"/>
    <property type="project" value="UniProtKB"/>
</dbReference>
<dbReference type="GO" id="GO:0099170">
    <property type="term" value="P:postsynaptic modulation of chemical synaptic transmission"/>
    <property type="evidence" value="ECO:0000266"/>
    <property type="project" value="RGD"/>
</dbReference>
<dbReference type="CDD" id="cd13240">
    <property type="entry name" value="PH1_Kalirin_Trio_like"/>
    <property type="match status" value="1"/>
</dbReference>
<dbReference type="CDD" id="cd13241">
    <property type="entry name" value="PH2_Kalirin_Trio_p63RhoGEF"/>
    <property type="match status" value="1"/>
</dbReference>
<dbReference type="CDD" id="cd00160">
    <property type="entry name" value="RhoGEF"/>
    <property type="match status" value="2"/>
</dbReference>
<dbReference type="CDD" id="cd00170">
    <property type="entry name" value="SEC14"/>
    <property type="match status" value="1"/>
</dbReference>
<dbReference type="CDD" id="cd11852">
    <property type="entry name" value="SH3_Kalirin_1"/>
    <property type="match status" value="1"/>
</dbReference>
<dbReference type="CDD" id="cd11853">
    <property type="entry name" value="SH3_Kalirin_2"/>
    <property type="match status" value="1"/>
</dbReference>
<dbReference type="CDD" id="cd00176">
    <property type="entry name" value="SPEC"/>
    <property type="match status" value="6"/>
</dbReference>
<dbReference type="CDD" id="cd14113">
    <property type="entry name" value="STKc_Trio_C"/>
    <property type="match status" value="1"/>
</dbReference>
<dbReference type="FunFam" id="1.20.900.10:FF:000001">
    <property type="entry name" value="Guanine nucleotide exchange factor DBS"/>
    <property type="match status" value="1"/>
</dbReference>
<dbReference type="FunFam" id="1.10.510.10:FF:000152">
    <property type="entry name" value="kalirin isoform X1"/>
    <property type="match status" value="1"/>
</dbReference>
<dbReference type="FunFam" id="2.30.29.30:FF:000091">
    <property type="entry name" value="kalirin isoform X1"/>
    <property type="match status" value="1"/>
</dbReference>
<dbReference type="FunFam" id="2.30.30.40:FF:000038">
    <property type="entry name" value="kalirin isoform X1"/>
    <property type="match status" value="1"/>
</dbReference>
<dbReference type="FunFam" id="2.30.30.40:FF:000040">
    <property type="entry name" value="kalirin isoform X1"/>
    <property type="match status" value="1"/>
</dbReference>
<dbReference type="FunFam" id="2.60.40.10:FF:000368">
    <property type="entry name" value="kalirin isoform X1"/>
    <property type="match status" value="1"/>
</dbReference>
<dbReference type="FunFam" id="1.20.58.60:FF:000034">
    <property type="entry name" value="kalirin isoform X2"/>
    <property type="match status" value="1"/>
</dbReference>
<dbReference type="FunFam" id="3.40.525.10:FF:000003">
    <property type="entry name" value="kalirin isoform X2"/>
    <property type="match status" value="1"/>
</dbReference>
<dbReference type="FunFam" id="1.20.58.60:FF:000024">
    <property type="entry name" value="Kalirin RhoGEF kinase a"/>
    <property type="match status" value="1"/>
</dbReference>
<dbReference type="FunFam" id="1.20.58.60:FF:000023">
    <property type="entry name" value="Kalirin RhoGEF kinase b"/>
    <property type="match status" value="1"/>
</dbReference>
<dbReference type="FunFam" id="1.20.58.60:FF:000032">
    <property type="entry name" value="Kalirin RhoGEF kinase b"/>
    <property type="match status" value="1"/>
</dbReference>
<dbReference type="FunFam" id="2.30.29.30:FF:000040">
    <property type="entry name" value="Kalirin RhoGEF kinase b"/>
    <property type="match status" value="1"/>
</dbReference>
<dbReference type="FunFam" id="1.20.900.10:FF:000008">
    <property type="entry name" value="rho guanine nucleotide exchange factor 25"/>
    <property type="match status" value="1"/>
</dbReference>
<dbReference type="FunFam" id="1.20.58.60:FF:000015">
    <property type="entry name" value="triple functional domain protein-like"/>
    <property type="match status" value="1"/>
</dbReference>
<dbReference type="Gene3D" id="1.20.58.60">
    <property type="match status" value="5"/>
</dbReference>
<dbReference type="Gene3D" id="3.40.525.10">
    <property type="entry name" value="CRAL-TRIO lipid binding domain"/>
    <property type="match status" value="1"/>
</dbReference>
<dbReference type="Gene3D" id="1.20.900.10">
    <property type="entry name" value="Dbl homology (DH) domain"/>
    <property type="match status" value="2"/>
</dbReference>
<dbReference type="Gene3D" id="2.60.40.10">
    <property type="entry name" value="Immunoglobulins"/>
    <property type="match status" value="1"/>
</dbReference>
<dbReference type="Gene3D" id="3.30.200.20">
    <property type="entry name" value="Phosphorylase Kinase, domain 1"/>
    <property type="match status" value="1"/>
</dbReference>
<dbReference type="Gene3D" id="2.30.29.30">
    <property type="entry name" value="Pleckstrin-homology domain (PH domain)/Phosphotyrosine-binding domain (PTB)"/>
    <property type="match status" value="2"/>
</dbReference>
<dbReference type="Gene3D" id="2.30.30.40">
    <property type="entry name" value="SH3 Domains"/>
    <property type="match status" value="2"/>
</dbReference>
<dbReference type="Gene3D" id="1.10.510.10">
    <property type="entry name" value="Transferase(Phosphotransferase) domain 1"/>
    <property type="match status" value="1"/>
</dbReference>
<dbReference type="InterPro" id="IPR001251">
    <property type="entry name" value="CRAL-TRIO_dom"/>
</dbReference>
<dbReference type="InterPro" id="IPR036865">
    <property type="entry name" value="CRAL-TRIO_dom_sf"/>
</dbReference>
<dbReference type="InterPro" id="IPR035899">
    <property type="entry name" value="DBL_dom_sf"/>
</dbReference>
<dbReference type="InterPro" id="IPR000219">
    <property type="entry name" value="DH_dom"/>
</dbReference>
<dbReference type="InterPro" id="IPR007110">
    <property type="entry name" value="Ig-like_dom"/>
</dbReference>
<dbReference type="InterPro" id="IPR036179">
    <property type="entry name" value="Ig-like_dom_sf"/>
</dbReference>
<dbReference type="InterPro" id="IPR013783">
    <property type="entry name" value="Ig-like_fold"/>
</dbReference>
<dbReference type="InterPro" id="IPR013098">
    <property type="entry name" value="Ig_I-set"/>
</dbReference>
<dbReference type="InterPro" id="IPR003599">
    <property type="entry name" value="Ig_sub"/>
</dbReference>
<dbReference type="InterPro" id="IPR003598">
    <property type="entry name" value="Ig_sub2"/>
</dbReference>
<dbReference type="InterPro" id="IPR047054">
    <property type="entry name" value="Kalirin_TRIO_PH_1"/>
</dbReference>
<dbReference type="InterPro" id="IPR028570">
    <property type="entry name" value="Kalirin_TRIO_SH3_1"/>
</dbReference>
<dbReference type="InterPro" id="IPR047053">
    <property type="entry name" value="Kalirin_TRIO_SH3_2"/>
</dbReference>
<dbReference type="InterPro" id="IPR011009">
    <property type="entry name" value="Kinase-like_dom_sf"/>
</dbReference>
<dbReference type="InterPro" id="IPR011993">
    <property type="entry name" value="PH-like_dom_sf"/>
</dbReference>
<dbReference type="InterPro" id="IPR001849">
    <property type="entry name" value="PH_domain"/>
</dbReference>
<dbReference type="InterPro" id="IPR000719">
    <property type="entry name" value="Prot_kinase_dom"/>
</dbReference>
<dbReference type="InterPro" id="IPR051336">
    <property type="entry name" value="RhoGEF_Guanine_NuclExch_SF"/>
</dbReference>
<dbReference type="InterPro" id="IPR008271">
    <property type="entry name" value="Ser/Thr_kinase_AS"/>
</dbReference>
<dbReference type="InterPro" id="IPR036028">
    <property type="entry name" value="SH3-like_dom_sf"/>
</dbReference>
<dbReference type="InterPro" id="IPR001452">
    <property type="entry name" value="SH3_domain"/>
</dbReference>
<dbReference type="InterPro" id="IPR055251">
    <property type="entry name" value="SOS1_NGEF_PH"/>
</dbReference>
<dbReference type="InterPro" id="IPR018159">
    <property type="entry name" value="Spectrin/alpha-actinin"/>
</dbReference>
<dbReference type="InterPro" id="IPR002017">
    <property type="entry name" value="Spectrin_repeat"/>
</dbReference>
<dbReference type="PANTHER" id="PTHR22826">
    <property type="entry name" value="RHO GUANINE EXCHANGE FACTOR-RELATED"/>
    <property type="match status" value="1"/>
</dbReference>
<dbReference type="PANTHER" id="PTHR22826:SF106">
    <property type="entry name" value="TRIO, ISOFORM A"/>
    <property type="match status" value="1"/>
</dbReference>
<dbReference type="Pfam" id="PF13716">
    <property type="entry name" value="CRAL_TRIO_2"/>
    <property type="match status" value="1"/>
</dbReference>
<dbReference type="Pfam" id="PF07679">
    <property type="entry name" value="I-set"/>
    <property type="match status" value="1"/>
</dbReference>
<dbReference type="Pfam" id="PF00069">
    <property type="entry name" value="Pkinase"/>
    <property type="match status" value="1"/>
</dbReference>
<dbReference type="Pfam" id="PF00621">
    <property type="entry name" value="RhoGEF"/>
    <property type="match status" value="2"/>
</dbReference>
<dbReference type="Pfam" id="PF16609">
    <property type="entry name" value="SH3-RhoG_link"/>
    <property type="match status" value="1"/>
</dbReference>
<dbReference type="Pfam" id="PF00018">
    <property type="entry name" value="SH3_1"/>
    <property type="match status" value="1"/>
</dbReference>
<dbReference type="Pfam" id="PF23587">
    <property type="entry name" value="SH3_KALRN"/>
    <property type="match status" value="1"/>
</dbReference>
<dbReference type="Pfam" id="PF22697">
    <property type="entry name" value="SOS1_NGEF_PH"/>
    <property type="match status" value="2"/>
</dbReference>
<dbReference type="Pfam" id="PF00435">
    <property type="entry name" value="Spectrin"/>
    <property type="match status" value="4"/>
</dbReference>
<dbReference type="Pfam" id="PF23323">
    <property type="entry name" value="Spectrin_6"/>
    <property type="match status" value="1"/>
</dbReference>
<dbReference type="SMART" id="SM00409">
    <property type="entry name" value="IG"/>
    <property type="match status" value="1"/>
</dbReference>
<dbReference type="SMART" id="SM00408">
    <property type="entry name" value="IGc2"/>
    <property type="match status" value="1"/>
</dbReference>
<dbReference type="SMART" id="SM00233">
    <property type="entry name" value="PH"/>
    <property type="match status" value="2"/>
</dbReference>
<dbReference type="SMART" id="SM00325">
    <property type="entry name" value="RhoGEF"/>
    <property type="match status" value="2"/>
</dbReference>
<dbReference type="SMART" id="SM00220">
    <property type="entry name" value="S_TKc"/>
    <property type="match status" value="1"/>
</dbReference>
<dbReference type="SMART" id="SM00516">
    <property type="entry name" value="SEC14"/>
    <property type="match status" value="1"/>
</dbReference>
<dbReference type="SMART" id="SM00326">
    <property type="entry name" value="SH3"/>
    <property type="match status" value="2"/>
</dbReference>
<dbReference type="SMART" id="SM00150">
    <property type="entry name" value="SPEC"/>
    <property type="match status" value="6"/>
</dbReference>
<dbReference type="SUPFAM" id="SSF52087">
    <property type="entry name" value="CRAL/TRIO domain"/>
    <property type="match status" value="1"/>
</dbReference>
<dbReference type="SUPFAM" id="SSF48065">
    <property type="entry name" value="DBL homology domain (DH-domain)"/>
    <property type="match status" value="2"/>
</dbReference>
<dbReference type="SUPFAM" id="SSF48726">
    <property type="entry name" value="Immunoglobulin"/>
    <property type="match status" value="1"/>
</dbReference>
<dbReference type="SUPFAM" id="SSF50729">
    <property type="entry name" value="PH domain-like"/>
    <property type="match status" value="2"/>
</dbReference>
<dbReference type="SUPFAM" id="SSF56112">
    <property type="entry name" value="Protein kinase-like (PK-like)"/>
    <property type="match status" value="1"/>
</dbReference>
<dbReference type="SUPFAM" id="SSF50044">
    <property type="entry name" value="SH3-domain"/>
    <property type="match status" value="2"/>
</dbReference>
<dbReference type="SUPFAM" id="SSF46966">
    <property type="entry name" value="Spectrin repeat"/>
    <property type="match status" value="6"/>
</dbReference>
<dbReference type="PROSITE" id="PS50191">
    <property type="entry name" value="CRAL_TRIO"/>
    <property type="match status" value="1"/>
</dbReference>
<dbReference type="PROSITE" id="PS50010">
    <property type="entry name" value="DH_2"/>
    <property type="match status" value="2"/>
</dbReference>
<dbReference type="PROSITE" id="PS50835">
    <property type="entry name" value="IG_LIKE"/>
    <property type="match status" value="1"/>
</dbReference>
<dbReference type="PROSITE" id="PS50003">
    <property type="entry name" value="PH_DOMAIN"/>
    <property type="match status" value="2"/>
</dbReference>
<dbReference type="PROSITE" id="PS50011">
    <property type="entry name" value="PROTEIN_KINASE_DOM"/>
    <property type="match status" value="1"/>
</dbReference>
<dbReference type="PROSITE" id="PS00108">
    <property type="entry name" value="PROTEIN_KINASE_ST"/>
    <property type="match status" value="1"/>
</dbReference>
<dbReference type="PROSITE" id="PS50002">
    <property type="entry name" value="SH3"/>
    <property type="match status" value="2"/>
</dbReference>
<gene>
    <name type="primary">Trio</name>
</gene>
<keyword id="KW-0067">ATP-binding</keyword>
<keyword id="KW-0966">Cell projection</keyword>
<keyword id="KW-0963">Cytoplasm</keyword>
<keyword id="KW-1015">Disulfide bond</keyword>
<keyword id="KW-0344">Guanine-nucleotide releasing factor</keyword>
<keyword id="KW-0393">Immunoglobulin domain</keyword>
<keyword id="KW-0418">Kinase</keyword>
<keyword id="KW-0547">Nucleotide-binding</keyword>
<keyword id="KW-0597">Phosphoprotein</keyword>
<keyword id="KW-1185">Reference proteome</keyword>
<keyword id="KW-0677">Repeat</keyword>
<keyword id="KW-0723">Serine/threonine-protein kinase</keyword>
<keyword id="KW-0728">SH3 domain</keyword>
<keyword id="KW-0808">Transferase</keyword>
<name>TRIO_RAT</name>
<accession>F1M0Z1</accession>
<protein>
    <recommendedName>
        <fullName>Triple functional domain protein</fullName>
        <ecNumber>2.7.11.1</ecNumber>
    </recommendedName>
    <alternativeName>
        <fullName>PTPRF-interacting protein</fullName>
    </alternativeName>
</protein>
<reference key="1">
    <citation type="journal article" date="2004" name="Nature">
        <title>Genome sequence of the Brown Norway rat yields insights into mammalian evolution.</title>
        <authorList>
            <person name="Gibbs R.A."/>
            <person name="Weinstock G.M."/>
            <person name="Metzker M.L."/>
            <person name="Muzny D.M."/>
            <person name="Sodergren E.J."/>
            <person name="Scherer S."/>
            <person name="Scott G."/>
            <person name="Steffen D."/>
            <person name="Worley K.C."/>
            <person name="Burch P.E."/>
            <person name="Okwuonu G."/>
            <person name="Hines S."/>
            <person name="Lewis L."/>
            <person name="Deramo C."/>
            <person name="Delgado O."/>
            <person name="Dugan-Rocha S."/>
            <person name="Miner G."/>
            <person name="Morgan M."/>
            <person name="Hawes A."/>
            <person name="Gill R."/>
            <person name="Holt R.A."/>
            <person name="Adams M.D."/>
            <person name="Amanatides P.G."/>
            <person name="Baden-Tillson H."/>
            <person name="Barnstead M."/>
            <person name="Chin S."/>
            <person name="Evans C.A."/>
            <person name="Ferriera S."/>
            <person name="Fosler C."/>
            <person name="Glodek A."/>
            <person name="Gu Z."/>
            <person name="Jennings D."/>
            <person name="Kraft C.L."/>
            <person name="Nguyen T."/>
            <person name="Pfannkoch C.M."/>
            <person name="Sitter C."/>
            <person name="Sutton G.G."/>
            <person name="Venter J.C."/>
            <person name="Woodage T."/>
            <person name="Smith D."/>
            <person name="Lee H.-M."/>
            <person name="Gustafson E."/>
            <person name="Cahill P."/>
            <person name="Kana A."/>
            <person name="Doucette-Stamm L."/>
            <person name="Weinstock K."/>
            <person name="Fechtel K."/>
            <person name="Weiss R.B."/>
            <person name="Dunn D.M."/>
            <person name="Green E.D."/>
            <person name="Blakesley R.W."/>
            <person name="Bouffard G.G."/>
            <person name="De Jong P.J."/>
            <person name="Osoegawa K."/>
            <person name="Zhu B."/>
            <person name="Marra M."/>
            <person name="Schein J."/>
            <person name="Bosdet I."/>
            <person name="Fjell C."/>
            <person name="Jones S."/>
            <person name="Krzywinski M."/>
            <person name="Mathewson C."/>
            <person name="Siddiqui A."/>
            <person name="Wye N."/>
            <person name="McPherson J."/>
            <person name="Zhao S."/>
            <person name="Fraser C.M."/>
            <person name="Shetty J."/>
            <person name="Shatsman S."/>
            <person name="Geer K."/>
            <person name="Chen Y."/>
            <person name="Abramzon S."/>
            <person name="Nierman W.C."/>
            <person name="Havlak P.H."/>
            <person name="Chen R."/>
            <person name="Durbin K.J."/>
            <person name="Egan A."/>
            <person name="Ren Y."/>
            <person name="Song X.-Z."/>
            <person name="Li B."/>
            <person name="Liu Y."/>
            <person name="Qin X."/>
            <person name="Cawley S."/>
            <person name="Cooney A.J."/>
            <person name="D'Souza L.M."/>
            <person name="Martin K."/>
            <person name="Wu J.Q."/>
            <person name="Gonzalez-Garay M.L."/>
            <person name="Jackson A.R."/>
            <person name="Kalafus K.J."/>
            <person name="McLeod M.P."/>
            <person name="Milosavljevic A."/>
            <person name="Virk D."/>
            <person name="Volkov A."/>
            <person name="Wheeler D.A."/>
            <person name="Zhang Z."/>
            <person name="Bailey J.A."/>
            <person name="Eichler E.E."/>
            <person name="Tuzun E."/>
            <person name="Birney E."/>
            <person name="Mongin E."/>
            <person name="Ureta-Vidal A."/>
            <person name="Woodwark C."/>
            <person name="Zdobnov E."/>
            <person name="Bork P."/>
            <person name="Suyama M."/>
            <person name="Torrents D."/>
            <person name="Alexandersson M."/>
            <person name="Trask B.J."/>
            <person name="Young J.M."/>
            <person name="Huang H."/>
            <person name="Wang H."/>
            <person name="Xing H."/>
            <person name="Daniels S."/>
            <person name="Gietzen D."/>
            <person name="Schmidt J."/>
            <person name="Stevens K."/>
            <person name="Vitt U."/>
            <person name="Wingrove J."/>
            <person name="Camara F."/>
            <person name="Mar Alba M."/>
            <person name="Abril J.F."/>
            <person name="Guigo R."/>
            <person name="Smit A."/>
            <person name="Dubchak I."/>
            <person name="Rubin E.M."/>
            <person name="Couronne O."/>
            <person name="Poliakov A."/>
            <person name="Huebner N."/>
            <person name="Ganten D."/>
            <person name="Goesele C."/>
            <person name="Hummel O."/>
            <person name="Kreitler T."/>
            <person name="Lee Y.-A."/>
            <person name="Monti J."/>
            <person name="Schulz H."/>
            <person name="Zimdahl H."/>
            <person name="Himmelbauer H."/>
            <person name="Lehrach H."/>
            <person name="Jacob H.J."/>
            <person name="Bromberg S."/>
            <person name="Gullings-Handley J."/>
            <person name="Jensen-Seaman M.I."/>
            <person name="Kwitek A.E."/>
            <person name="Lazar J."/>
            <person name="Pasko D."/>
            <person name="Tonellato P.J."/>
            <person name="Twigger S."/>
            <person name="Ponting C.P."/>
            <person name="Duarte J.M."/>
            <person name="Rice S."/>
            <person name="Goodstadt L."/>
            <person name="Beatson S.A."/>
            <person name="Emes R.D."/>
            <person name="Winter E.E."/>
            <person name="Webber C."/>
            <person name="Brandt P."/>
            <person name="Nyakatura G."/>
            <person name="Adetobi M."/>
            <person name="Chiaromonte F."/>
            <person name="Elnitski L."/>
            <person name="Eswara P."/>
            <person name="Hardison R.C."/>
            <person name="Hou M."/>
            <person name="Kolbe D."/>
            <person name="Makova K."/>
            <person name="Miller W."/>
            <person name="Nekrutenko A."/>
            <person name="Riemer C."/>
            <person name="Schwartz S."/>
            <person name="Taylor J."/>
            <person name="Yang S."/>
            <person name="Zhang Y."/>
            <person name="Lindpaintner K."/>
            <person name="Andrews T.D."/>
            <person name="Caccamo M."/>
            <person name="Clamp M."/>
            <person name="Clarke L."/>
            <person name="Curwen V."/>
            <person name="Durbin R.M."/>
            <person name="Eyras E."/>
            <person name="Searle S.M."/>
            <person name="Cooper G.M."/>
            <person name="Batzoglou S."/>
            <person name="Brudno M."/>
            <person name="Sidow A."/>
            <person name="Stone E.A."/>
            <person name="Payseur B.A."/>
            <person name="Bourque G."/>
            <person name="Lopez-Otin C."/>
            <person name="Puente X.S."/>
            <person name="Chakrabarti K."/>
            <person name="Chatterji S."/>
            <person name="Dewey C."/>
            <person name="Pachter L."/>
            <person name="Bray N."/>
            <person name="Yap V.B."/>
            <person name="Caspi A."/>
            <person name="Tesler G."/>
            <person name="Pevzner P.A."/>
            <person name="Haussler D."/>
            <person name="Roskin K.M."/>
            <person name="Baertsch R."/>
            <person name="Clawson H."/>
            <person name="Furey T.S."/>
            <person name="Hinrichs A.S."/>
            <person name="Karolchik D."/>
            <person name="Kent W.J."/>
            <person name="Rosenbloom K.R."/>
            <person name="Trumbower H."/>
            <person name="Weirauch M."/>
            <person name="Cooper D.N."/>
            <person name="Stenson P.D."/>
            <person name="Ma B."/>
            <person name="Brent M."/>
            <person name="Arumugam M."/>
            <person name="Shteynberg D."/>
            <person name="Copley R.R."/>
            <person name="Taylor M.S."/>
            <person name="Riethman H."/>
            <person name="Mudunuri U."/>
            <person name="Peterson J."/>
            <person name="Guyer M."/>
            <person name="Felsenfeld A."/>
            <person name="Old S."/>
            <person name="Mockrin S."/>
            <person name="Collins F.S."/>
        </authorList>
    </citation>
    <scope>NUCLEOTIDE SEQUENCE [LARGE SCALE GENOMIC DNA]</scope>
    <source>
        <strain>Brown Norway</strain>
    </source>
</reference>
<reference key="2">
    <citation type="journal article" date="2012" name="Nat. Commun.">
        <title>Quantitative maps of protein phosphorylation sites across 14 different rat organs and tissues.</title>
        <authorList>
            <person name="Lundby A."/>
            <person name="Secher A."/>
            <person name="Lage K."/>
            <person name="Nordsborg N.B."/>
            <person name="Dmytriyev A."/>
            <person name="Lundby C."/>
            <person name="Olsen J.V."/>
        </authorList>
    </citation>
    <scope>PHOSPHORYLATION [LARGE SCALE ANALYSIS] AT SER-1627; SER-1632; SER-1633; THR-1824; SER-2283; SER-2459 AND SER-2463</scope>
    <scope>IDENTIFICATION BY MASS SPECTROMETRY [LARGE SCALE ANALYSIS]</scope>
</reference>
<reference key="3">
    <citation type="journal article" date="2016" name="Hum. Mol. Genet.">
        <title>TRIO loss of function is associated with mild intellectual disability and affects dendritic branching and synapse function.</title>
        <authorList>
            <person name="Ba W."/>
            <person name="Yan Y."/>
            <person name="Reijnders M.R."/>
            <person name="Schuurs-Hoeijmakers J.H."/>
            <person name="Feenstra I."/>
            <person name="Bongers E.M."/>
            <person name="Bosch D.G."/>
            <person name="De Leeuw N."/>
            <person name="Pfundt R."/>
            <person name="Gilissen C."/>
            <person name="De Vries P.F."/>
            <person name="Veltman J.A."/>
            <person name="Hoischen A."/>
            <person name="Mefford H.C."/>
            <person name="Eichler E.E."/>
            <person name="Vissers L.E."/>
            <person name="Nadif Kasri N."/>
            <person name="De Vries B.B."/>
        </authorList>
    </citation>
    <scope>FUNCTION</scope>
    <scope>DEVELOPMENTAL STAGE</scope>
</reference>
<reference key="4">
    <citation type="journal article" date="2016" name="PLoS ONE">
        <title>Trio, a Rho Family GEF, Interacts with the Presynaptic Active Zone Proteins Piccolo and Bassoon.</title>
        <authorList>
            <person name="Terry-Lorenzo R.T."/>
            <person name="Torres V.I."/>
            <person name="Wagh D."/>
            <person name="Galaz J."/>
            <person name="Swanson S.K."/>
            <person name="Florens L."/>
            <person name="Washburn M.P."/>
            <person name="Waites C.L."/>
            <person name="Gundelfinger E.D."/>
            <person name="Reimer R.J."/>
            <person name="Garner C.C."/>
        </authorList>
    </citation>
    <scope>INTERACTION WITH BSN AND PCLO</scope>
</reference>
<sequence length="3100" mass="347860">MSGSSGGATAPAASSGPAAAASAAGSGCGGGAGEGAEEAAKDLADIAAFFRSGFRKNDEMKAMDVLPILKEKVAYLSGGRDKRGGPILTFPARSNHDRMRQEDLRRLISYLACIPSEEVCKRGFTVIVDMRGSKWDSIKPLLKILQESFPCCIHIALIIKPDNFWQKQRTNFGSSKFEFETNMVSLEGLTKVVDPSQLTPEFDGCLEYNHEEWIEIRVAFEDYISNAAHMLSRLEELQDVLAKKELPQDLEGARNMIDEHSQLKKKVIKAPIEDLDLEGQKLLQRIQSSESFPKKNSGSGNADLQNLLPKVSTMLDRLHSTRQHLHQMWHVRKLKLDQCFQLRLFEQDAEKMFDWITHNKGLFLNSYTEIGASHPHAMELQTQHNHFAMNCMNVYVNINRIMSVANRLVESGHYASQQIKQIANQLEQEWKAFAAALDERSTLLDMSSIFHQKAEKYMSNVDSWCKACGEVDLPSELQDLEDAIHHHQGIYEHITLAYSEVSQDGKSLLDKLQRPLTPGSSDSLTASANYSKAVHHVLDVIHEVLHHQRQLENIWQHRKVRLHQRLQLCVFQQDVQQVLDWIENHGEAFLSKHTGVGKSLHRARALQKRHEDFEEVAQNTYTNADKLLEAAEQLAQTGECDPEEIYQAAHQLEDRIQDFVRRVEQRKILLDMSVSFHTHVKELWTWLEELQKELLDDVYAESVEAVQDLIKRFGQQQQTTLQVTVNVIKEGEDLIQQLRDSAISSNKTPHNSSINHIETVLQQLDEAQSQMEELFQERKIKLELFLQLRIFERDAIDIISDLESWNDELSQQMNDFDTEDLTIAEQRLQHHADKALTMNNLTFDVIHQGQDLLQYVNEVQASGVELLCDRDVDMATRVQDLLEFLHEKQQELDLAAEQHRKHLEQCVQLRHLQAEVKQVLGWIRNGESMLNAGLITASSLQEAEQLQREHEQFQHAIEKTHQSALQVQQKAEAMLQANHYDMDMIRDCAEKVASHWQQLMLKMEDRLKLVNASVAFYKTSEQVCSVLESLEQEYKREEDWCGGADKLGPNSETDHVTPMISKHLEQKEAFLKACTLARRNADVFLKYLHRNSVSMPGMVTHIKAPEQQVKNILNELFQRENRVLHYWTMRKRRLDQCQQYVVFERSAKQALEWIHDNGEFYLSTHTSTGSSIQHTQELLKEHEEFQITAKQTKERVKLLIQLADGFCEKGHAHAAEIKKCVTAVDKRYRDFSLRMEKYRTSLEKALGISSDSNKSSKSLQLDIIPASIPGSEVKLRDAAHELNEEKRKSARRKEFIMAELIQTEKAYVRDLRECMDTYLWEMTSGVEEIPPGIVNKELIIFGNMQEIYEFHNNIFLKELEKYEQLPEDVGHCFVTWADKFQMYVTYCKNKPDSTQLILEHAGSYFDEIQQRHGLANSISSYLIKPVQRITKYQLLLKELLTCCEEGKGEIKDGLEVMLSVPKRANDAMHLSMLEGFDENIESQGELILQESFQVWDPKTLIRKGRERHLFLFEMSLVFSKEVKDSSGRSKYLYKSKLFTSELGVTEHVEGDPCKFALWVGRTPTSDNKIVLKASSIENKQDWIKHIREVIQERTVHLRGALKEPIHIPKTAPAARQKGRRDGEDLDSQGDGSSQPDTISIASRTSQNTLDSDKLSGGCELTVVIHDFTACNSNELTIRRGQTVEVLERPHDKPDWCLVRTTDRSPAAEGLVPCGSLCIAHSRSSMEMEGIFNHKDSLSVSSNDASPPASVASLQPHMMGAQSSPGPKRPGNTLRKWLTSPVRRLSSGKADGHAKKLAHKHKKSREVRKSADAGSQKDSDDSAATPQDETIEERGRNEGLSSGTLSKSSSSGMQSCGEEEGEEGADAVPLPPPMAIQQHSLLQPDSQDDKASSRLLVRPTSSETPSAAELVSAIEELVKSKMALEDRPSSLLVDQGDSSSPSFNPSDNSLLSSSSPIDEMEERKCSLSLKRRHYVLQELVETERDYVRDLGCVVEGYMALMKEDGVPDDMKGKDKIVFGNIHQIYDWHRDFFLGELEKCLEDPEKLGSLFVKHERRLHMYIVYCQNKPKSEHIVSEYIDTFFEDLKQRLGHRLQLTDLLIKPVQRIMKYQLLLKDFLKYSKKASLDTSELEKAVEVMCIVPKRCNDMMNVGRLQGFDGKIVAQGKLLLQDTFLVTDQDAGLLPRCKERRVFLFEQIVIFSEPLDKKKGFSMPGFLFKNSIKVSCLCLEENVESDPCKFALTSRTGDAVETFILHSSSPSVRQTWIHEINQILENQRNFLNALTSPIEYQRNHSGGGGSGSGGSSGGGGGSGGSGASSGGSSSHGSGPSSCSSGPSSSRSRPSRIPQPVRHHPPMLVSSAASSQAEADKMSGMSAPSPSLPTPSNSLALEASLGQPSRLPLSGDSEGHERETEPIPKMKVMESPRKALGSTSGTSQDGNTKDARGNLGPLPLGKTRPGAVSPLNSPLSTTFPSPFGKEAFPPSSPLQKGGSFWSSIPASPASRPSSFTFPGDSDSLQRQTHRHAAPSKDTDRMSTCSSASEQSVQSTQSNGSESSSSSNISTMLVTHEYTAVKEDEINVYQGEVVQILASNQQNMFLVFRAATDQCPAAEGWIPGFVLGHTSAVIMENPDGTFKKSTSWHTALRLRKKSEKKDKDGKRDGKLENGYRKPREGLSNKLLNPNYIYDVPPEFVIPLSEVTCETGETVVFRCRVCGRPKASITWKGPEHNTLNNDDHYNISYSDVGEATLKIIGVSTEDDGVYTCIAVNDMGSASSSASLRVLGPGSDGIVVTWKDNFDAFYSEVAELGRGRFAVVKKCDQKGTKRAVATKFVNKKLMKRDQVTHELGILQNLQHPLFVSLLDTFETPTSYVLVLELADQGRLLDCVVRWGSLTEGKVRAHLGEVLEAVRYLHNCRIAHLDLKPENILVDQSLAKPTIKLTDFGDAVQLNTTYYIHQLLGNPEFAAPEIILGNPVSLTADTWSVGVLTYVLLSGVSPFLDDSVEETCLNICRLDFSFPEDYFQGVSQKAKEFVCFLLQEDPAKRPSAALALQEQWLQAGNGSGKGMGVLDTSRLTSFIERRKHQNDVRPIRSIKNFLQSRLLPRV</sequence>